<gene>
    <name evidence="8" type="primary">APX4</name>
    <name evidence="11" type="ordered locus">Os08g0549100</name>
    <name evidence="9" type="ordered locus">LOC_Os08g43560</name>
    <name evidence="10" type="ORF">OJ1479_B11.9</name>
</gene>
<proteinExistence type="evidence at transcript level"/>
<sequence>MAAPVVDAEYLRQVDRARRHLRALISSKGCAPIMLRLAWHDAGTYDVNTKTGGANGSIRYEEEYTHGSNAGLKIAIDLLEPIKAKSPKITYADLYQLAGVVAVEVTGGPTVEFIPGRRDSSVCPREGRLPDAKKGALHLRDIFYRMGLSDKDIVALSGGHTLGRAHPERSGFEGAWTQEPLKFDNSYFLELLKGESEGLLKLPTDKALLEDPSFRRYVDLYARDEDTFFKDYAESHKKLSELGFTPRSSGPASTKSDLSTGAVLAQSAVGVAVAAAVVIVSYLYEASKKSK</sequence>
<protein>
    <recommendedName>
        <fullName evidence="9">Probable L-ascorbate peroxidase 4, peroxisomal</fullName>
        <ecNumber evidence="9">1.11.1.11</ecNumber>
    </recommendedName>
    <alternativeName>
        <fullName evidence="8">OsAPx4</fullName>
    </alternativeName>
</protein>
<comment type="function">
    <text evidence="1">Plays a key role in hydrogen peroxide removal.</text>
</comment>
<comment type="catalytic activity">
    <reaction evidence="9">
        <text>L-ascorbate + H2O2 = L-dehydroascorbate + 2 H2O</text>
        <dbReference type="Rhea" id="RHEA:22996"/>
        <dbReference type="ChEBI" id="CHEBI:15377"/>
        <dbReference type="ChEBI" id="CHEBI:16240"/>
        <dbReference type="ChEBI" id="CHEBI:38290"/>
        <dbReference type="ChEBI" id="CHEBI:58539"/>
        <dbReference type="EC" id="1.11.1.11"/>
    </reaction>
</comment>
<comment type="cofactor">
    <cofactor evidence="1">
        <name>heme b</name>
        <dbReference type="ChEBI" id="CHEBI:60344"/>
    </cofactor>
    <text evidence="1">Binds 1 heme b (iron(II)-protoporphyrin IX) group.</text>
</comment>
<comment type="subcellular location">
    <subcellularLocation>
        <location evidence="2">Peroxisome membrane</location>
        <topology evidence="9">Single-pass membrane protein</topology>
    </subcellularLocation>
</comment>
<comment type="tissue specificity">
    <text evidence="6">Expressed in leaves, stems and flowers.</text>
</comment>
<comment type="induction">
    <text evidence="7">Down-regulated by hydrogen peroxide in leaves.</text>
</comment>
<comment type="miscellaneous">
    <text evidence="1">Binds one cation per subunit; probably K(+), but might also be Ca(2+).</text>
</comment>
<comment type="similarity">
    <text evidence="9">Belongs to the peroxidase family. Ascorbate peroxidase subfamily.</text>
</comment>
<comment type="caution">
    <text evidence="9">According to PubMed:15599508, it may be peroxisomal. There is however no experimental evidence to prove this.</text>
</comment>
<organism>
    <name type="scientific">Oryza sativa subsp. japonica</name>
    <name type="common">Rice</name>
    <dbReference type="NCBI Taxonomy" id="39947"/>
    <lineage>
        <taxon>Eukaryota</taxon>
        <taxon>Viridiplantae</taxon>
        <taxon>Streptophyta</taxon>
        <taxon>Embryophyta</taxon>
        <taxon>Tracheophyta</taxon>
        <taxon>Spermatophyta</taxon>
        <taxon>Magnoliopsida</taxon>
        <taxon>Liliopsida</taxon>
        <taxon>Poales</taxon>
        <taxon>Poaceae</taxon>
        <taxon>BOP clade</taxon>
        <taxon>Oryzoideae</taxon>
        <taxon>Oryzeae</taxon>
        <taxon>Oryzinae</taxon>
        <taxon>Oryza</taxon>
        <taxon>Oryza sativa</taxon>
    </lineage>
</organism>
<dbReference type="EC" id="1.11.1.11" evidence="9"/>
<dbReference type="EMBL" id="HQ013288">
    <property type="protein sequence ID" value="AEK99328.1"/>
    <property type="molecule type" value="mRNA"/>
</dbReference>
<dbReference type="EMBL" id="AP003912">
    <property type="protein sequence ID" value="BAD08951.1"/>
    <property type="molecule type" value="Genomic_DNA"/>
</dbReference>
<dbReference type="EMBL" id="AP008214">
    <property type="protein sequence ID" value="BAF24353.1"/>
    <property type="molecule type" value="Genomic_DNA"/>
</dbReference>
<dbReference type="EMBL" id="AP014964">
    <property type="protein sequence ID" value="BAT06572.1"/>
    <property type="molecule type" value="Genomic_DNA"/>
</dbReference>
<dbReference type="EMBL" id="AK070842">
    <property type="protein sequence ID" value="BAG92166.1"/>
    <property type="molecule type" value="mRNA"/>
</dbReference>
<dbReference type="RefSeq" id="XP_015650808.1">
    <property type="nucleotide sequence ID" value="XM_015795322.1"/>
</dbReference>
<dbReference type="SMR" id="Q6ZJJ1"/>
<dbReference type="FunCoup" id="Q6ZJJ1">
    <property type="interactions" value="1660"/>
</dbReference>
<dbReference type="STRING" id="39947.Q6ZJJ1"/>
<dbReference type="PeroxiBase" id="1868">
    <property type="entry name" value="OsAPx04"/>
</dbReference>
<dbReference type="PaxDb" id="39947-Q6ZJJ1"/>
<dbReference type="EnsemblPlants" id="Os08t0549100-01">
    <property type="protein sequence ID" value="Os08t0549100-01"/>
    <property type="gene ID" value="Os08g0549100"/>
</dbReference>
<dbReference type="Gramene" id="Os08t0549100-01">
    <property type="protein sequence ID" value="Os08t0549100-01"/>
    <property type="gene ID" value="Os08g0549100"/>
</dbReference>
<dbReference type="KEGG" id="dosa:Os08g0549100"/>
<dbReference type="eggNOG" id="ENOG502QR1E">
    <property type="taxonomic scope" value="Eukaryota"/>
</dbReference>
<dbReference type="HOGENOM" id="CLU_036959_3_0_1"/>
<dbReference type="InParanoid" id="Q6ZJJ1"/>
<dbReference type="OMA" id="HELMMLP"/>
<dbReference type="OrthoDB" id="2859658at2759"/>
<dbReference type="BRENDA" id="1.11.1.11">
    <property type="organism ID" value="4460"/>
</dbReference>
<dbReference type="Proteomes" id="UP000000763">
    <property type="component" value="Chromosome 8"/>
</dbReference>
<dbReference type="Proteomes" id="UP000059680">
    <property type="component" value="Chromosome 8"/>
</dbReference>
<dbReference type="GO" id="GO:0009507">
    <property type="term" value="C:chloroplast"/>
    <property type="evidence" value="ECO:0000318"/>
    <property type="project" value="GO_Central"/>
</dbReference>
<dbReference type="GO" id="GO:0005778">
    <property type="term" value="C:peroxisomal membrane"/>
    <property type="evidence" value="ECO:0007669"/>
    <property type="project" value="UniProtKB-SubCell"/>
</dbReference>
<dbReference type="GO" id="GO:0020037">
    <property type="term" value="F:heme binding"/>
    <property type="evidence" value="ECO:0007669"/>
    <property type="project" value="InterPro"/>
</dbReference>
<dbReference type="GO" id="GO:0016688">
    <property type="term" value="F:L-ascorbate peroxidase activity"/>
    <property type="evidence" value="ECO:0007669"/>
    <property type="project" value="UniProtKB-EC"/>
</dbReference>
<dbReference type="GO" id="GO:0046872">
    <property type="term" value="F:metal ion binding"/>
    <property type="evidence" value="ECO:0007669"/>
    <property type="project" value="UniProtKB-KW"/>
</dbReference>
<dbReference type="GO" id="GO:0004601">
    <property type="term" value="F:peroxidase activity"/>
    <property type="evidence" value="ECO:0000318"/>
    <property type="project" value="GO_Central"/>
</dbReference>
<dbReference type="GO" id="GO:0034599">
    <property type="term" value="P:cellular response to oxidative stress"/>
    <property type="evidence" value="ECO:0000318"/>
    <property type="project" value="GO_Central"/>
</dbReference>
<dbReference type="GO" id="GO:0042744">
    <property type="term" value="P:hydrogen peroxide catabolic process"/>
    <property type="evidence" value="ECO:0000318"/>
    <property type="project" value="GO_Central"/>
</dbReference>
<dbReference type="GO" id="GO:0000302">
    <property type="term" value="P:response to reactive oxygen species"/>
    <property type="evidence" value="ECO:0000318"/>
    <property type="project" value="GO_Central"/>
</dbReference>
<dbReference type="CDD" id="cd00691">
    <property type="entry name" value="ascorbate_peroxidase"/>
    <property type="match status" value="1"/>
</dbReference>
<dbReference type="FunFam" id="1.10.520.10:FF:000003">
    <property type="entry name" value="Cytosolic ascorbate peroxidase"/>
    <property type="match status" value="1"/>
</dbReference>
<dbReference type="FunFam" id="1.10.420.10:FF:000003">
    <property type="entry name" value="L-ascorbate peroxidase, cytosolic"/>
    <property type="match status" value="1"/>
</dbReference>
<dbReference type="Gene3D" id="1.10.520.10">
    <property type="match status" value="1"/>
</dbReference>
<dbReference type="Gene3D" id="1.10.420.10">
    <property type="entry name" value="Peroxidase, domain 2"/>
    <property type="match status" value="1"/>
</dbReference>
<dbReference type="InterPro" id="IPR044831">
    <property type="entry name" value="Ccp1-like"/>
</dbReference>
<dbReference type="InterPro" id="IPR002016">
    <property type="entry name" value="Haem_peroxidase"/>
</dbReference>
<dbReference type="InterPro" id="IPR010255">
    <property type="entry name" value="Haem_peroxidase_sf"/>
</dbReference>
<dbReference type="InterPro" id="IPR002207">
    <property type="entry name" value="Peroxidase_I"/>
</dbReference>
<dbReference type="InterPro" id="IPR019794">
    <property type="entry name" value="Peroxidases_AS"/>
</dbReference>
<dbReference type="InterPro" id="IPR019793">
    <property type="entry name" value="Peroxidases_heam-ligand_BS"/>
</dbReference>
<dbReference type="PANTHER" id="PTHR31356:SF36">
    <property type="entry name" value="L-ASCORBATE PEROXIDASE 3"/>
    <property type="match status" value="1"/>
</dbReference>
<dbReference type="PANTHER" id="PTHR31356">
    <property type="entry name" value="THYLAKOID LUMENAL 29 KDA PROTEIN, CHLOROPLASTIC-RELATED"/>
    <property type="match status" value="1"/>
</dbReference>
<dbReference type="Pfam" id="PF00141">
    <property type="entry name" value="peroxidase"/>
    <property type="match status" value="1"/>
</dbReference>
<dbReference type="PRINTS" id="PR00459">
    <property type="entry name" value="ASPEROXIDASE"/>
</dbReference>
<dbReference type="PRINTS" id="PR00458">
    <property type="entry name" value="PEROXIDASE"/>
</dbReference>
<dbReference type="SUPFAM" id="SSF48113">
    <property type="entry name" value="Heme-dependent peroxidases"/>
    <property type="match status" value="1"/>
</dbReference>
<dbReference type="PROSITE" id="PS00435">
    <property type="entry name" value="PEROXIDASE_1"/>
    <property type="match status" value="1"/>
</dbReference>
<dbReference type="PROSITE" id="PS00436">
    <property type="entry name" value="PEROXIDASE_2"/>
    <property type="match status" value="1"/>
</dbReference>
<dbReference type="PROSITE" id="PS50873">
    <property type="entry name" value="PEROXIDASE_4"/>
    <property type="match status" value="1"/>
</dbReference>
<feature type="chain" id="PRO_0000055596" description="Probable L-ascorbate peroxidase 4, peroxisomal">
    <location>
        <begin position="1"/>
        <end position="291"/>
    </location>
</feature>
<feature type="transmembrane region" description="Helical" evidence="3">
    <location>
        <begin position="263"/>
        <end position="283"/>
    </location>
</feature>
<feature type="active site" description="Proton acceptor" evidence="4 5">
    <location>
        <position position="40"/>
    </location>
</feature>
<feature type="binding site" description="axial binding residue" evidence="4">
    <location>
        <position position="160"/>
    </location>
    <ligand>
        <name>heme b</name>
        <dbReference type="ChEBI" id="CHEBI:60344"/>
    </ligand>
    <ligandPart>
        <name>Fe</name>
        <dbReference type="ChEBI" id="CHEBI:18248"/>
    </ligandPart>
</feature>
<feature type="binding site" evidence="1">
    <location>
        <position position="161"/>
    </location>
    <ligand>
        <name>K(+)</name>
        <dbReference type="ChEBI" id="CHEBI:29103"/>
    </ligand>
</feature>
<feature type="binding site" evidence="1">
    <location>
        <position position="177"/>
    </location>
    <ligand>
        <name>K(+)</name>
        <dbReference type="ChEBI" id="CHEBI:29103"/>
    </ligand>
</feature>
<feature type="binding site" evidence="1">
    <location>
        <position position="184"/>
    </location>
    <ligand>
        <name>K(+)</name>
        <dbReference type="ChEBI" id="CHEBI:29103"/>
    </ligand>
</feature>
<feature type="site" description="Transition state stabilizer" evidence="4">
    <location>
        <position position="36"/>
    </location>
</feature>
<evidence type="ECO:0000250" key="1"/>
<evidence type="ECO:0000250" key="2">
    <source>
        <dbReference type="UniProtKB" id="Q0JEQ2"/>
    </source>
</evidence>
<evidence type="ECO:0000255" key="3"/>
<evidence type="ECO:0000255" key="4">
    <source>
        <dbReference type="PROSITE-ProRule" id="PRU00297"/>
    </source>
</evidence>
<evidence type="ECO:0000255" key="5">
    <source>
        <dbReference type="PROSITE-ProRule" id="PRU10012"/>
    </source>
</evidence>
<evidence type="ECO:0000269" key="6">
    <source>
    </source>
</evidence>
<evidence type="ECO:0000269" key="7">
    <source>
    </source>
</evidence>
<evidence type="ECO:0000303" key="8">
    <source>
    </source>
</evidence>
<evidence type="ECO:0000305" key="9"/>
<evidence type="ECO:0000312" key="10">
    <source>
        <dbReference type="EMBL" id="BAD08951.1"/>
    </source>
</evidence>
<evidence type="ECO:0000312" key="11">
    <source>
        <dbReference type="EMBL" id="BAT06572.1"/>
    </source>
</evidence>
<reference key="1">
    <citation type="submission" date="2010-08" db="EMBL/GenBank/DDBJ databases">
        <title>Molecular cloning of L-ascorbate peroxidase gene in rice.</title>
        <authorList>
            <person name="Lee S.B."/>
            <person name="Yoon U.H."/>
            <person name="Jeong M.J."/>
            <person name="Suh E.J."/>
            <person name="Lee J.S."/>
        </authorList>
    </citation>
    <scope>NUCLEOTIDE SEQUENCE [MRNA]</scope>
    <source>
        <strain>cv. Ilpoombyeo</strain>
        <tissue>Immature seed</tissue>
    </source>
</reference>
<reference key="2">
    <citation type="journal article" date="2005" name="Nature">
        <title>The map-based sequence of the rice genome.</title>
        <authorList>
            <consortium name="International rice genome sequencing project (IRGSP)"/>
        </authorList>
    </citation>
    <scope>NUCLEOTIDE SEQUENCE [LARGE SCALE GENOMIC DNA]</scope>
    <source>
        <strain>cv. Nipponbare</strain>
    </source>
</reference>
<reference key="3">
    <citation type="journal article" date="2008" name="Nucleic Acids Res.">
        <title>The rice annotation project database (RAP-DB): 2008 update.</title>
        <authorList>
            <consortium name="The rice annotation project (RAP)"/>
        </authorList>
    </citation>
    <scope>GENOME REANNOTATION</scope>
    <source>
        <strain>cv. Nipponbare</strain>
    </source>
</reference>
<reference key="4">
    <citation type="journal article" date="2013" name="Rice">
        <title>Improvement of the Oryza sativa Nipponbare reference genome using next generation sequence and optical map data.</title>
        <authorList>
            <person name="Kawahara Y."/>
            <person name="de la Bastide M."/>
            <person name="Hamilton J.P."/>
            <person name="Kanamori H."/>
            <person name="McCombie W.R."/>
            <person name="Ouyang S."/>
            <person name="Schwartz D.C."/>
            <person name="Tanaka T."/>
            <person name="Wu J."/>
            <person name="Zhou S."/>
            <person name="Childs K.L."/>
            <person name="Davidson R.M."/>
            <person name="Lin H."/>
            <person name="Quesada-Ocampo L."/>
            <person name="Vaillancourt B."/>
            <person name="Sakai H."/>
            <person name="Lee S.S."/>
            <person name="Kim J."/>
            <person name="Numa H."/>
            <person name="Itoh T."/>
            <person name="Buell C.R."/>
            <person name="Matsumoto T."/>
        </authorList>
    </citation>
    <scope>GENOME REANNOTATION</scope>
    <source>
        <strain>cv. Nipponbare</strain>
    </source>
</reference>
<reference key="5">
    <citation type="journal article" date="2003" name="Science">
        <title>Collection, mapping, and annotation of over 28,000 cDNA clones from japonica rice.</title>
        <authorList>
            <consortium name="The rice full-length cDNA consortium"/>
        </authorList>
    </citation>
    <scope>NUCLEOTIDE SEQUENCE [LARGE SCALE MRNA]</scope>
    <source>
        <strain>cv. Nipponbare</strain>
    </source>
</reference>
<reference key="6">
    <citation type="journal article" date="2004" name="J. Mol. Evol.">
        <title>Analysis of the molecular evolutionary history of the ascorbate peroxidase gene family: inferences from the rice genome.</title>
        <authorList>
            <person name="Teixeira F.K."/>
            <person name="Menezes-Benavente L."/>
            <person name="Margis R."/>
            <person name="Margis-Pinheiro M."/>
        </authorList>
    </citation>
    <scope>NOMENCLATURE</scope>
</reference>
<reference key="7">
    <citation type="journal article" date="2006" name="Planta">
        <title>Rice ascorbate peroxidase gene family encodes functionally diverse isoforms localized in different subcellular compartments.</title>
        <authorList>
            <person name="Teixeira F.K."/>
            <person name="Menezes-Benavente L."/>
            <person name="Galvao V.C."/>
            <person name="Margis R."/>
            <person name="Margis-Pinheiro M."/>
        </authorList>
    </citation>
    <scope>TISSUE SPECIFICITY</scope>
</reference>
<reference key="8">
    <citation type="journal article" date="2015" name="J. Plant Physiol.">
        <title>Transcriptional profile of genes involved in ascorbate glutathione cycle in senescing leaves for an early senescence leaf (esl) rice mutant.</title>
        <authorList>
            <person name="Li Z."/>
            <person name="Su D."/>
            <person name="Lei B."/>
            <person name="Wang F."/>
            <person name="Geng W."/>
            <person name="Pan G."/>
            <person name="Cheng F."/>
        </authorList>
    </citation>
    <scope>INDUCTION</scope>
</reference>
<accession>Q6ZJJ1</accession>
<accession>Q0J3W2</accession>
<name>APX4_ORYSJ</name>
<keyword id="KW-0106">Calcium</keyword>
<keyword id="KW-0349">Heme</keyword>
<keyword id="KW-0376">Hydrogen peroxide</keyword>
<keyword id="KW-0408">Iron</keyword>
<keyword id="KW-0472">Membrane</keyword>
<keyword id="KW-0479">Metal-binding</keyword>
<keyword id="KW-0560">Oxidoreductase</keyword>
<keyword id="KW-0575">Peroxidase</keyword>
<keyword id="KW-0576">Peroxisome</keyword>
<keyword id="KW-0630">Potassium</keyword>
<keyword id="KW-1185">Reference proteome</keyword>
<keyword id="KW-0812">Transmembrane</keyword>
<keyword id="KW-1133">Transmembrane helix</keyword>